<organism>
    <name type="scientific">Cryptococcus neoformans var. neoformans serotype D (strain B-3501A)</name>
    <name type="common">Filobasidiella neoformans</name>
    <dbReference type="NCBI Taxonomy" id="283643"/>
    <lineage>
        <taxon>Eukaryota</taxon>
        <taxon>Fungi</taxon>
        <taxon>Dikarya</taxon>
        <taxon>Basidiomycota</taxon>
        <taxon>Agaricomycotina</taxon>
        <taxon>Tremellomycetes</taxon>
        <taxon>Tremellales</taxon>
        <taxon>Cryptococcaceae</taxon>
        <taxon>Cryptococcus</taxon>
        <taxon>Cryptococcus neoformans species complex</taxon>
    </lineage>
</organism>
<protein>
    <recommendedName>
        <fullName>Histone acetyltransferase type B catalytic subunit</fullName>
        <ecNumber evidence="3">2.3.1.48</ecNumber>
    </recommendedName>
</protein>
<keyword id="KW-0012">Acyltransferase</keyword>
<keyword id="KW-0156">Chromatin regulator</keyword>
<keyword id="KW-0963">Cytoplasm</keyword>
<keyword id="KW-0227">DNA damage</keyword>
<keyword id="KW-0234">DNA repair</keyword>
<keyword id="KW-0539">Nucleus</keyword>
<keyword id="KW-0808">Transferase</keyword>
<gene>
    <name type="primary">HAT1</name>
    <name type="ordered locus">CNBA5260</name>
</gene>
<evidence type="ECO:0000250" key="1"/>
<evidence type="ECO:0000250" key="2">
    <source>
        <dbReference type="UniProtKB" id="O14929"/>
    </source>
</evidence>
<evidence type="ECO:0000250" key="3">
    <source>
        <dbReference type="UniProtKB" id="Q12341"/>
    </source>
</evidence>
<evidence type="ECO:0000305" key="4"/>
<dbReference type="EC" id="2.3.1.48" evidence="3"/>
<dbReference type="EMBL" id="AAEY01000003">
    <property type="protein sequence ID" value="EAL23182.1"/>
    <property type="molecule type" value="Genomic_DNA"/>
</dbReference>
<dbReference type="RefSeq" id="XP_777829.1">
    <property type="nucleotide sequence ID" value="XM_772736.1"/>
</dbReference>
<dbReference type="SMR" id="P0CO07"/>
<dbReference type="EnsemblFungi" id="AAW41043">
    <property type="protein sequence ID" value="AAW41043"/>
    <property type="gene ID" value="CNA05430"/>
</dbReference>
<dbReference type="GeneID" id="4933789"/>
<dbReference type="KEGG" id="cnb:CNBA5260"/>
<dbReference type="VEuPathDB" id="FungiDB:CNBA5260"/>
<dbReference type="HOGENOM" id="CLU_036024_2_1_1"/>
<dbReference type="OrthoDB" id="3678at5206"/>
<dbReference type="GO" id="GO:0000781">
    <property type="term" value="C:chromosome, telomeric region"/>
    <property type="evidence" value="ECO:0007669"/>
    <property type="project" value="GOC"/>
</dbReference>
<dbReference type="GO" id="GO:0005737">
    <property type="term" value="C:cytoplasm"/>
    <property type="evidence" value="ECO:0007669"/>
    <property type="project" value="UniProtKB-SubCell"/>
</dbReference>
<dbReference type="GO" id="GO:0005634">
    <property type="term" value="C:nucleus"/>
    <property type="evidence" value="ECO:0007669"/>
    <property type="project" value="UniProtKB-SubCell"/>
</dbReference>
<dbReference type="GO" id="GO:0004402">
    <property type="term" value="F:histone acetyltransferase activity"/>
    <property type="evidence" value="ECO:0007669"/>
    <property type="project" value="UniProtKB-EC"/>
</dbReference>
<dbReference type="GO" id="GO:0042393">
    <property type="term" value="F:histone binding"/>
    <property type="evidence" value="ECO:0007669"/>
    <property type="project" value="InterPro"/>
</dbReference>
<dbReference type="GO" id="GO:0006281">
    <property type="term" value="P:DNA repair"/>
    <property type="evidence" value="ECO:0007669"/>
    <property type="project" value="UniProtKB-KW"/>
</dbReference>
<dbReference type="GO" id="GO:0031509">
    <property type="term" value="P:subtelomeric heterochromatin formation"/>
    <property type="evidence" value="ECO:0007669"/>
    <property type="project" value="InterPro"/>
</dbReference>
<dbReference type="CDD" id="cd04301">
    <property type="entry name" value="NAT_SF"/>
    <property type="match status" value="1"/>
</dbReference>
<dbReference type="FunFam" id="3.40.630.30:FF:000072">
    <property type="entry name" value="Histone acetyltransferase type B catalytic subunit"/>
    <property type="match status" value="1"/>
</dbReference>
<dbReference type="FunFam" id="3.90.360.10:FF:000006">
    <property type="entry name" value="Histone acetyltransferase type B catalytic subunit"/>
    <property type="match status" value="1"/>
</dbReference>
<dbReference type="Gene3D" id="1.10.10.390">
    <property type="match status" value="1"/>
</dbReference>
<dbReference type="Gene3D" id="3.40.630.30">
    <property type="match status" value="1"/>
</dbReference>
<dbReference type="Gene3D" id="3.90.360.10">
    <property type="entry name" value="Histone acetyl transferase 1 (HAT1), N-terminal domain"/>
    <property type="match status" value="1"/>
</dbReference>
<dbReference type="InterPro" id="IPR016181">
    <property type="entry name" value="Acyl_CoA_acyltransferase"/>
</dbReference>
<dbReference type="InterPro" id="IPR000182">
    <property type="entry name" value="GNAT_dom"/>
</dbReference>
<dbReference type="InterPro" id="IPR019467">
    <property type="entry name" value="Hat1_N"/>
</dbReference>
<dbReference type="InterPro" id="IPR037113">
    <property type="entry name" value="Hat1_N_sf"/>
</dbReference>
<dbReference type="InterPro" id="IPR017380">
    <property type="entry name" value="Hist_AcTrfase_B-typ_cat-su"/>
</dbReference>
<dbReference type="InterPro" id="IPR013523">
    <property type="entry name" value="Hist_AcTrfase_HAT1_C"/>
</dbReference>
<dbReference type="PANTHER" id="PTHR12046">
    <property type="entry name" value="HISTONE ACETYLTRANSFERASE TYPE B CATALYTIC SUBUNIT"/>
    <property type="match status" value="1"/>
</dbReference>
<dbReference type="Pfam" id="PF00583">
    <property type="entry name" value="Acetyltransf_1"/>
    <property type="match status" value="1"/>
</dbReference>
<dbReference type="Pfam" id="PF21184">
    <property type="entry name" value="HAT1_C_fung"/>
    <property type="match status" value="1"/>
</dbReference>
<dbReference type="Pfam" id="PF10394">
    <property type="entry name" value="Hat1_N"/>
    <property type="match status" value="1"/>
</dbReference>
<dbReference type="PIRSF" id="PIRSF038084">
    <property type="entry name" value="HAT-B_cat"/>
    <property type="match status" value="1"/>
</dbReference>
<dbReference type="SUPFAM" id="SSF55729">
    <property type="entry name" value="Acyl-CoA N-acyltransferases (Nat)"/>
    <property type="match status" value="1"/>
</dbReference>
<sequence>MAETLEEWISDSNQVLNLQMVRTPEDASLLQYEEQQNIDVFNPAFTYPIFGDNEKIFGYKGLDIKLHFASGSLRQYLDISYDAKLASSTTPPDEIEGALYKFIPPDYTKSEVEFQKRVAGDAETFKPLGEKIGSYAHPSAGRKGKGQGDSGMAAGKAIEDNEDVVEYEMYKATWSTPGFREYHRRMQIFVLLFIEGGSYVHEDEDAWEFIVLYERRTRPDSGIFTYHFVGYVSVYPFWCYPDRVRLRLSQFVILPPYQHQGHGSKLYNMLFRHMLDRSEVAELTIEDPAEAFEDLRDRNDLRFLVKEGIVKDPMLYVDVGKGKRGSRVEWELAIRRKYKIAQRQFDRLLEMLLFRQLDKGNPDKVKAYRLHVKARLYRFNYEMLSQMTVEERKEALAKTYESVVEDYKRILGMTFG</sequence>
<comment type="function">
    <text evidence="3">Catalytic component of the histone acetylase B (HAT-B) complex. Acetylates 'Lys-12' of histone H4 which is required for telomeric silencing. Has intrinsic substrate specificity that modifies lysine in recognition sequence GXGKXG. Involved in DNA double-strand break repair.</text>
</comment>
<comment type="catalytic activity">
    <reaction evidence="3">
        <text>L-lysyl-[protein] + acetyl-CoA = N(6)-acetyl-L-lysyl-[protein] + CoA + H(+)</text>
        <dbReference type="Rhea" id="RHEA:45948"/>
        <dbReference type="Rhea" id="RHEA-COMP:9752"/>
        <dbReference type="Rhea" id="RHEA-COMP:10731"/>
        <dbReference type="ChEBI" id="CHEBI:15378"/>
        <dbReference type="ChEBI" id="CHEBI:29969"/>
        <dbReference type="ChEBI" id="CHEBI:57287"/>
        <dbReference type="ChEBI" id="CHEBI:57288"/>
        <dbReference type="ChEBI" id="CHEBI:61930"/>
        <dbReference type="EC" id="2.3.1.48"/>
    </reaction>
</comment>
<comment type="subunit">
    <text evidence="3">Component of the HAT-B complex composed of at least HAT1 and HAT2. The HAT-B complex binds to histone H4 tail.</text>
</comment>
<comment type="subcellular location">
    <subcellularLocation>
        <location evidence="1">Cytoplasm</location>
    </subcellularLocation>
    <subcellularLocation>
        <location evidence="1">Nucleus</location>
    </subcellularLocation>
</comment>
<comment type="similarity">
    <text evidence="4">Belongs to the HAT1 family.</text>
</comment>
<accession>P0CO07</accession>
<accession>Q55ZG3</accession>
<accession>Q5KNS9</accession>
<proteinExistence type="inferred from homology"/>
<name>HAT1_CRYNB</name>
<feature type="chain" id="PRO_0000410108" description="Histone acetyltransferase type B catalytic subunit">
    <location>
        <begin position="1"/>
        <end position="416"/>
    </location>
</feature>
<feature type="region of interest" description="Interaction with histone H4 N-terminus" evidence="3">
    <location>
        <begin position="52"/>
        <end position="54"/>
    </location>
</feature>
<feature type="region of interest" description="Interaction with histone H4 N-terminus" evidence="3">
    <location>
        <begin position="235"/>
        <end position="237"/>
    </location>
</feature>
<feature type="active site" description="Proton donor/acceptor" evidence="3">
    <location>
        <position position="286"/>
    </location>
</feature>
<feature type="binding site" evidence="3">
    <location>
        <begin position="251"/>
        <end position="253"/>
    </location>
    <ligand>
        <name>acetyl-CoA</name>
        <dbReference type="ChEBI" id="CHEBI:57288"/>
    </ligand>
</feature>
<feature type="binding site" evidence="3">
    <location>
        <begin position="258"/>
        <end position="264"/>
    </location>
    <ligand>
        <name>acetyl-CoA</name>
        <dbReference type="ChEBI" id="CHEBI:57288"/>
    </ligand>
</feature>
<feature type="site" description="Interaction with histone H4 N-terminus" evidence="2">
    <location>
        <position position="207"/>
    </location>
</feature>
<reference key="1">
    <citation type="journal article" date="2005" name="Science">
        <title>The genome of the basidiomycetous yeast and human pathogen Cryptococcus neoformans.</title>
        <authorList>
            <person name="Loftus B.J."/>
            <person name="Fung E."/>
            <person name="Roncaglia P."/>
            <person name="Rowley D."/>
            <person name="Amedeo P."/>
            <person name="Bruno D."/>
            <person name="Vamathevan J."/>
            <person name="Miranda M."/>
            <person name="Anderson I.J."/>
            <person name="Fraser J.A."/>
            <person name="Allen J.E."/>
            <person name="Bosdet I.E."/>
            <person name="Brent M.R."/>
            <person name="Chiu R."/>
            <person name="Doering T.L."/>
            <person name="Donlin M.J."/>
            <person name="D'Souza C.A."/>
            <person name="Fox D.S."/>
            <person name="Grinberg V."/>
            <person name="Fu J."/>
            <person name="Fukushima M."/>
            <person name="Haas B.J."/>
            <person name="Huang J.C."/>
            <person name="Janbon G."/>
            <person name="Jones S.J.M."/>
            <person name="Koo H.L."/>
            <person name="Krzywinski M.I."/>
            <person name="Kwon-Chung K.J."/>
            <person name="Lengeler K.B."/>
            <person name="Maiti R."/>
            <person name="Marra M.A."/>
            <person name="Marra R.E."/>
            <person name="Mathewson C.A."/>
            <person name="Mitchell T.G."/>
            <person name="Pertea M."/>
            <person name="Riggs F.R."/>
            <person name="Salzberg S.L."/>
            <person name="Schein J.E."/>
            <person name="Shvartsbeyn A."/>
            <person name="Shin H."/>
            <person name="Shumway M."/>
            <person name="Specht C.A."/>
            <person name="Suh B.B."/>
            <person name="Tenney A."/>
            <person name="Utterback T.R."/>
            <person name="Wickes B.L."/>
            <person name="Wortman J.R."/>
            <person name="Wye N.H."/>
            <person name="Kronstad J.W."/>
            <person name="Lodge J.K."/>
            <person name="Heitman J."/>
            <person name="Davis R.W."/>
            <person name="Fraser C.M."/>
            <person name="Hyman R.W."/>
        </authorList>
    </citation>
    <scope>NUCLEOTIDE SEQUENCE [LARGE SCALE GENOMIC DNA]</scope>
    <source>
        <strain>B-3501A</strain>
    </source>
</reference>